<proteinExistence type="inferred from homology"/>
<keyword id="KW-0678">Repressor</keyword>
<keyword id="KW-0687">Ribonucleoprotein</keyword>
<keyword id="KW-0689">Ribosomal protein</keyword>
<keyword id="KW-0694">RNA-binding</keyword>
<keyword id="KW-0699">rRNA-binding</keyword>
<keyword id="KW-0810">Translation regulation</keyword>
<keyword id="KW-0820">tRNA-binding</keyword>
<reference key="1">
    <citation type="journal article" date="2007" name="Genome Res.">
        <title>Reductive evolution and niche adaptation inferred from the genome of Mycobacterium ulcerans, the causative agent of Buruli ulcer.</title>
        <authorList>
            <person name="Stinear T.P."/>
            <person name="Seemann T."/>
            <person name="Pidot S."/>
            <person name="Frigui W."/>
            <person name="Reysset G."/>
            <person name="Garnier T."/>
            <person name="Meurice G."/>
            <person name="Simon D."/>
            <person name="Bouchier C."/>
            <person name="Ma L."/>
            <person name="Tichit M."/>
            <person name="Porter J.L."/>
            <person name="Ryan J."/>
            <person name="Johnson P.D.R."/>
            <person name="Davies J.K."/>
            <person name="Jenkin G.A."/>
            <person name="Small P.L.C."/>
            <person name="Jones L.M."/>
            <person name="Tekaia F."/>
            <person name="Laval F."/>
            <person name="Daffe M."/>
            <person name="Parkhill J."/>
            <person name="Cole S.T."/>
        </authorList>
    </citation>
    <scope>NUCLEOTIDE SEQUENCE [LARGE SCALE GENOMIC DNA]</scope>
    <source>
        <strain>Agy99</strain>
    </source>
</reference>
<comment type="function">
    <text evidence="1">Binds directly to 23S rRNA. The L1 stalk is quite mobile in the ribosome, and is involved in E site tRNA release.</text>
</comment>
<comment type="function">
    <text evidence="1">Protein L1 is also a translational repressor protein, it controls the translation of the L11 operon by binding to its mRNA.</text>
</comment>
<comment type="subunit">
    <text evidence="1">Part of the 50S ribosomal subunit.</text>
</comment>
<comment type="similarity">
    <text evidence="1">Belongs to the universal ribosomal protein uL1 family.</text>
</comment>
<evidence type="ECO:0000255" key="1">
    <source>
        <dbReference type="HAMAP-Rule" id="MF_01318"/>
    </source>
</evidence>
<evidence type="ECO:0000256" key="2">
    <source>
        <dbReference type="SAM" id="MobiDB-lite"/>
    </source>
</evidence>
<evidence type="ECO:0000305" key="3"/>
<name>RL1_MYCUA</name>
<accession>A0PM08</accession>
<sequence length="235" mass="24813">MSKNSKAYRAAAEKVDRSNPYTPLQAAKLAKETSSTKQDATVEVAIRLGVDPRKADQMVRGTVNLPHGTGKTARVAVFAVGEKADAAVAAGADIVGSDDLIEKIQGGFLDFDAVIATPDQMAKVGRIARVLGPRGLMPNPKTGTVTPDVAKAVADIKGGKINFRVDKQANLHFVIGKASFEENKLAENYGAAIDEVLRLKPSASKGRYLKKITVSTTTGPGIPVDPSVTRNFTEA</sequence>
<protein>
    <recommendedName>
        <fullName evidence="1">Large ribosomal subunit protein uL1</fullName>
    </recommendedName>
    <alternativeName>
        <fullName evidence="3">50S ribosomal protein L1</fullName>
    </alternativeName>
</protein>
<organism>
    <name type="scientific">Mycobacterium ulcerans (strain Agy99)</name>
    <dbReference type="NCBI Taxonomy" id="362242"/>
    <lineage>
        <taxon>Bacteria</taxon>
        <taxon>Bacillati</taxon>
        <taxon>Actinomycetota</taxon>
        <taxon>Actinomycetes</taxon>
        <taxon>Mycobacteriales</taxon>
        <taxon>Mycobacteriaceae</taxon>
        <taxon>Mycobacterium</taxon>
        <taxon>Mycobacterium ulcerans group</taxon>
    </lineage>
</organism>
<gene>
    <name evidence="1" type="primary">rplA</name>
    <name type="ordered locus">MUL_0727</name>
</gene>
<dbReference type="EMBL" id="CP000325">
    <property type="protein sequence ID" value="ABL03377.1"/>
    <property type="molecule type" value="Genomic_DNA"/>
</dbReference>
<dbReference type="RefSeq" id="WP_011739002.1">
    <property type="nucleotide sequence ID" value="NC_008611.1"/>
</dbReference>
<dbReference type="SMR" id="A0PM08"/>
<dbReference type="KEGG" id="mul:MUL_0727"/>
<dbReference type="eggNOG" id="COG0081">
    <property type="taxonomic scope" value="Bacteria"/>
</dbReference>
<dbReference type="HOGENOM" id="CLU_062853_0_0_11"/>
<dbReference type="Proteomes" id="UP000000765">
    <property type="component" value="Chromosome"/>
</dbReference>
<dbReference type="GO" id="GO:0015934">
    <property type="term" value="C:large ribosomal subunit"/>
    <property type="evidence" value="ECO:0007669"/>
    <property type="project" value="InterPro"/>
</dbReference>
<dbReference type="GO" id="GO:0019843">
    <property type="term" value="F:rRNA binding"/>
    <property type="evidence" value="ECO:0007669"/>
    <property type="project" value="UniProtKB-UniRule"/>
</dbReference>
<dbReference type="GO" id="GO:0003735">
    <property type="term" value="F:structural constituent of ribosome"/>
    <property type="evidence" value="ECO:0007669"/>
    <property type="project" value="InterPro"/>
</dbReference>
<dbReference type="GO" id="GO:0000049">
    <property type="term" value="F:tRNA binding"/>
    <property type="evidence" value="ECO:0007669"/>
    <property type="project" value="UniProtKB-KW"/>
</dbReference>
<dbReference type="GO" id="GO:0006417">
    <property type="term" value="P:regulation of translation"/>
    <property type="evidence" value="ECO:0007669"/>
    <property type="project" value="UniProtKB-KW"/>
</dbReference>
<dbReference type="GO" id="GO:0006412">
    <property type="term" value="P:translation"/>
    <property type="evidence" value="ECO:0007669"/>
    <property type="project" value="UniProtKB-UniRule"/>
</dbReference>
<dbReference type="CDD" id="cd00403">
    <property type="entry name" value="Ribosomal_L1"/>
    <property type="match status" value="1"/>
</dbReference>
<dbReference type="FunFam" id="3.40.50.790:FF:000001">
    <property type="entry name" value="50S ribosomal protein L1"/>
    <property type="match status" value="1"/>
</dbReference>
<dbReference type="Gene3D" id="3.30.190.20">
    <property type="match status" value="1"/>
</dbReference>
<dbReference type="Gene3D" id="3.40.50.790">
    <property type="match status" value="1"/>
</dbReference>
<dbReference type="HAMAP" id="MF_01318_B">
    <property type="entry name" value="Ribosomal_uL1_B"/>
    <property type="match status" value="1"/>
</dbReference>
<dbReference type="InterPro" id="IPR005878">
    <property type="entry name" value="Ribosom_uL1_bac-type"/>
</dbReference>
<dbReference type="InterPro" id="IPR002143">
    <property type="entry name" value="Ribosomal_uL1"/>
</dbReference>
<dbReference type="InterPro" id="IPR023674">
    <property type="entry name" value="Ribosomal_uL1-like"/>
</dbReference>
<dbReference type="InterPro" id="IPR028364">
    <property type="entry name" value="Ribosomal_uL1/biogenesis"/>
</dbReference>
<dbReference type="InterPro" id="IPR016095">
    <property type="entry name" value="Ribosomal_uL1_3-a/b-sand"/>
</dbReference>
<dbReference type="InterPro" id="IPR023673">
    <property type="entry name" value="Ribosomal_uL1_CS"/>
</dbReference>
<dbReference type="NCBIfam" id="TIGR01169">
    <property type="entry name" value="rplA_bact"/>
    <property type="match status" value="1"/>
</dbReference>
<dbReference type="PANTHER" id="PTHR36427">
    <property type="entry name" value="54S RIBOSOMAL PROTEIN L1, MITOCHONDRIAL"/>
    <property type="match status" value="1"/>
</dbReference>
<dbReference type="PANTHER" id="PTHR36427:SF3">
    <property type="entry name" value="LARGE RIBOSOMAL SUBUNIT PROTEIN UL1M"/>
    <property type="match status" value="1"/>
</dbReference>
<dbReference type="Pfam" id="PF00687">
    <property type="entry name" value="Ribosomal_L1"/>
    <property type="match status" value="1"/>
</dbReference>
<dbReference type="PIRSF" id="PIRSF002155">
    <property type="entry name" value="Ribosomal_L1"/>
    <property type="match status" value="1"/>
</dbReference>
<dbReference type="SUPFAM" id="SSF56808">
    <property type="entry name" value="Ribosomal protein L1"/>
    <property type="match status" value="1"/>
</dbReference>
<dbReference type="PROSITE" id="PS01199">
    <property type="entry name" value="RIBOSOMAL_L1"/>
    <property type="match status" value="1"/>
</dbReference>
<feature type="chain" id="PRO_0000308056" description="Large ribosomal subunit protein uL1">
    <location>
        <begin position="1"/>
        <end position="235"/>
    </location>
</feature>
<feature type="region of interest" description="Disordered" evidence="2">
    <location>
        <begin position="1"/>
        <end position="22"/>
    </location>
</feature>